<comment type="function">
    <text evidence="1">Essential for mitochondrial protein synthesis and required for the maturation of small ribosomal subunits.</text>
</comment>
<comment type="subcellular location">
    <subcellularLocation>
        <location>Mitochondrion</location>
    </subcellularLocation>
</comment>
<comment type="similarity">
    <text evidence="2">Belongs to the universal ribosomal protein uS3 family.</text>
</comment>
<organism>
    <name type="scientific">Cyberlindnera mrakii</name>
    <name type="common">Yeast</name>
    <name type="synonym">Williopsis mrakii</name>
    <dbReference type="NCBI Taxonomy" id="1004253"/>
    <lineage>
        <taxon>Eukaryota</taxon>
        <taxon>Fungi</taxon>
        <taxon>Dikarya</taxon>
        <taxon>Ascomycota</taxon>
        <taxon>Saccharomycotina</taxon>
        <taxon>Saccharomycetes</taxon>
        <taxon>Phaffomycetales</taxon>
        <taxon>Phaffomycetaceae</taxon>
        <taxon>Cyberlindnera</taxon>
    </lineage>
</organism>
<evidence type="ECO:0000250" key="1"/>
<evidence type="ECO:0000305" key="2"/>
<geneLocation type="mitochondrion"/>
<gene>
    <name type="primary">VAR1</name>
</gene>
<keyword id="KW-0496">Mitochondrion</keyword>
<keyword id="KW-0687">Ribonucleoprotein</keyword>
<keyword id="KW-0689">Ribosomal protein</keyword>
<dbReference type="EMBL" id="X66594">
    <property type="protein sequence ID" value="CAA47158.1"/>
    <property type="molecule type" value="Genomic_DNA"/>
</dbReference>
<dbReference type="PIR" id="S42734">
    <property type="entry name" value="S42734"/>
</dbReference>
<dbReference type="SMR" id="P47906"/>
<dbReference type="GO" id="GO:0005739">
    <property type="term" value="C:mitochondrion"/>
    <property type="evidence" value="ECO:0007669"/>
    <property type="project" value="UniProtKB-SubCell"/>
</dbReference>
<dbReference type="GO" id="GO:1990904">
    <property type="term" value="C:ribonucleoprotein complex"/>
    <property type="evidence" value="ECO:0007669"/>
    <property type="project" value="UniProtKB-KW"/>
</dbReference>
<dbReference type="GO" id="GO:0005840">
    <property type="term" value="C:ribosome"/>
    <property type="evidence" value="ECO:0007669"/>
    <property type="project" value="UniProtKB-KW"/>
</dbReference>
<name>RMAR_CYBMR</name>
<proteinExistence type="inferred from homology"/>
<protein>
    <recommendedName>
        <fullName evidence="2">Small ribosomal subunit protein uS3m</fullName>
    </recommendedName>
    <alternativeName>
        <fullName>Ribosomal protein VAR1, mitochondrial</fullName>
    </alternativeName>
</protein>
<accession>P47906</accession>
<feature type="chain" id="PRO_0000220075" description="Small ribosomal subunit protein uS3m">
    <location>
        <begin position="1"/>
        <end position="380"/>
    </location>
</feature>
<reference key="1">
    <citation type="journal article" date="1994" name="Yeast">
        <title>Genes of the linear mitochondrial DNA of Williopsis mrakii: coding sequences for a maturase-like protein, a ribosomal protein VAR1 homologue, cytochrome oxidase subunit 2 and methionyl tRNA.</title>
        <authorList>
            <person name="Drissi R."/>
            <person name="Sor F."/>
            <person name="Fukuhara H."/>
        </authorList>
    </citation>
    <scope>NUCLEOTIDE SEQUENCE [GENOMIC DNA]</scope>
    <source>
        <strain>ATCC 10743 / CBS 1707 / JCM 3614 / NBRC 0897 / NRRL Y-1364 / VKM Y-173</strain>
    </source>
</reference>
<sequence>MTNNKKLYLYKLSSKAMNYSMDKNERNVLYLNKYLHEYNNKGTKLQNSNMMNSWNNQLYKFNKNEVINTLLTDKLVSKLLVKLFVIKEMGINNPSYLQGSQMGRRIFINRPKFKHTINTVYINFNYNDTNMKMINNKHTLYYGSLIKDINNILGCFNYKNHNNELFNIATYLSGLYNKKVMIMPNKMKYNYNDNVIFNSSISYDLDKYKGGLAGKTYSKLLRDNIPMNNSLSIKNNYMTNIINNNNIKYNNMISNNSLNIKDIYKSFDINKITNELLVNKYLIGLSMLFKGKNIKKAGVSRSIKEKLLFGSLSNKLYRKNSGLLVYKNNNNTTKYLNFDININKKYKLNYMPNHHAISQLSKVNKAKTGVYGISVKLNTI</sequence>